<organism>
    <name type="scientific">Myxococcus xanthus</name>
    <dbReference type="NCBI Taxonomy" id="34"/>
    <lineage>
        <taxon>Bacteria</taxon>
        <taxon>Pseudomonadati</taxon>
        <taxon>Myxococcota</taxon>
        <taxon>Myxococcia</taxon>
        <taxon>Myxococcales</taxon>
        <taxon>Cystobacterineae</taxon>
        <taxon>Myxococcaceae</taxon>
        <taxon>Myxococcus</taxon>
    </lineage>
</organism>
<protein>
    <recommendedName>
        <fullName>Uncharacterized 18.1 kDa protein in carS 3'region</fullName>
    </recommendedName>
    <alternativeName>
        <fullName>ORFY</fullName>
    </alternativeName>
</protein>
<sequence>MSEHVSPQELRRKWKLANAEPLEGGHRLEAYRALAQSCPAFVPNLLSLSRTLLAGRNEAADPEAAVSEAEQVLRSASDVSAGAPEPLLALGHFLVSVRQAPDEAERAFSSAASAAMALLEEAWAGWIHALGAQGQLEAALEVEERARSLFPSSKAISQAVAFARAQSGTR</sequence>
<reference key="1">
    <citation type="journal article" date="1993" name="Mol. Microbiol.">
        <title>Light-induced carotenogenesis in Myxococcus xanthus: DNA sequence analysis of the carR region.</title>
        <authorList>
            <person name="McGowan S.J."/>
            <person name="Gorham H.C."/>
            <person name="Hodgson D.A."/>
        </authorList>
    </citation>
    <scope>NUCLEOTIDE SEQUENCE [GENOMIC DNA]</scope>
    <source>
        <strain>DK101</strain>
    </source>
</reference>
<name>YCRS_MYXXA</name>
<accession>Q06929</accession>
<proteinExistence type="predicted"/>
<dbReference type="EMBL" id="X71062">
    <property type="protein sequence ID" value="CAA50384.1"/>
    <property type="molecule type" value="Genomic_DNA"/>
</dbReference>
<dbReference type="PIR" id="S39880">
    <property type="entry name" value="S39880"/>
</dbReference>
<dbReference type="RefSeq" id="WP_011554098.1">
    <property type="nucleotide sequence ID" value="NZ_JABFNQ010000003.1"/>
</dbReference>
<dbReference type="SMR" id="Q06929"/>
<dbReference type="GeneID" id="41361420"/>
<dbReference type="OMA" id="WAGWIHA"/>
<dbReference type="Gene3D" id="1.25.40.10">
    <property type="entry name" value="Tetratricopeptide repeat domain"/>
    <property type="match status" value="1"/>
</dbReference>
<dbReference type="InterPro" id="IPR011990">
    <property type="entry name" value="TPR-like_helical_dom_sf"/>
</dbReference>
<dbReference type="SUPFAM" id="SSF48452">
    <property type="entry name" value="TPR-like"/>
    <property type="match status" value="1"/>
</dbReference>
<feature type="chain" id="PRO_0000066182" description="Uncharacterized 18.1 kDa protein in carS 3'region">
    <location>
        <begin position="1"/>
        <end position="170"/>
    </location>
</feature>